<comment type="function">
    <text evidence="1 3">Regulatory protein of the MTREX-exosome complex involved in the synthesis of the 60S ribosomal subunit. Participates in an early cleavage of the pre-rRNA processing pathway in cooperation with NVL (By similarity). Required for blastocyst formation, is necessary for RNA transcription, processing and/or stability during preimplantation development (PubMed:21799883).</text>
</comment>
<comment type="subunit">
    <text evidence="1">Isoform 1 interacts (through WDR repeats) with NVL; the interaction is independent of RNA or pre-60S ribosome particles. Isoform 2 does not interact with NVL. Interacts with MTREX; the interaction dissociation in a late stage of rRNA synthesis is required for appropriate maturation of pre-60S particles and depends on the ATPase activity of NVL.</text>
</comment>
<comment type="subcellular location">
    <subcellularLocation>
        <location evidence="1">Nucleus</location>
        <location evidence="1">Nucleolus</location>
    </subcellularLocation>
    <subcellularLocation>
        <location evidence="3">Nucleus</location>
    </subcellularLocation>
    <text evidence="1">Nucleolar location depends on active PolI transcription of pre-rRNA.</text>
</comment>
<comment type="developmental stage">
    <text evidence="3">Expressed at low levels in MII oocytes and 1-cell embryos and increases through subsequent cleavage stage divisions. The peak of mRNA expression occurs at the morula stage, with a slight decrease in blastocyst embryos.</text>
</comment>
<gene>
    <name type="primary">Wdr74</name>
</gene>
<accession>Q8VCG3</accession>
<proteinExistence type="evidence at transcript level"/>
<keyword id="KW-0488">Methylation</keyword>
<keyword id="KW-0539">Nucleus</keyword>
<keyword id="KW-0597">Phosphoprotein</keyword>
<keyword id="KW-1185">Reference proteome</keyword>
<keyword id="KW-0677">Repeat</keyword>
<keyword id="KW-0853">WD repeat</keyword>
<organism>
    <name type="scientific">Mus musculus</name>
    <name type="common">Mouse</name>
    <dbReference type="NCBI Taxonomy" id="10090"/>
    <lineage>
        <taxon>Eukaryota</taxon>
        <taxon>Metazoa</taxon>
        <taxon>Chordata</taxon>
        <taxon>Craniata</taxon>
        <taxon>Vertebrata</taxon>
        <taxon>Euteleostomi</taxon>
        <taxon>Mammalia</taxon>
        <taxon>Eutheria</taxon>
        <taxon>Euarchontoglires</taxon>
        <taxon>Glires</taxon>
        <taxon>Rodentia</taxon>
        <taxon>Myomorpha</taxon>
        <taxon>Muroidea</taxon>
        <taxon>Muridae</taxon>
        <taxon>Murinae</taxon>
        <taxon>Mus</taxon>
        <taxon>Mus</taxon>
    </lineage>
</organism>
<protein>
    <recommendedName>
        <fullName>WD repeat-containing protein 74</fullName>
    </recommendedName>
</protein>
<feature type="chain" id="PRO_0000051429" description="WD repeat-containing protein 74">
    <location>
        <begin position="1"/>
        <end position="384"/>
    </location>
</feature>
<feature type="repeat" description="WD 1">
    <location>
        <begin position="40"/>
        <end position="80"/>
    </location>
</feature>
<feature type="repeat" description="WD 2">
    <location>
        <begin position="83"/>
        <end position="122"/>
    </location>
</feature>
<feature type="repeat" description="WD 3">
    <location>
        <begin position="128"/>
        <end position="168"/>
    </location>
</feature>
<feature type="repeat" description="WD 4">
    <location>
        <begin position="179"/>
        <end position="220"/>
    </location>
</feature>
<feature type="repeat" description="WD 5">
    <location>
        <begin position="224"/>
        <end position="266"/>
    </location>
</feature>
<feature type="repeat" description="WD 6">
    <location>
        <begin position="267"/>
        <end position="306"/>
    </location>
</feature>
<feature type="region of interest" description="Required for nucleolar and nuclear location" evidence="1">
    <location>
        <begin position="320"/>
        <end position="384"/>
    </location>
</feature>
<feature type="region of interest" description="Disordered" evidence="2">
    <location>
        <begin position="323"/>
        <end position="384"/>
    </location>
</feature>
<feature type="compositionally biased region" description="Basic residues" evidence="2">
    <location>
        <begin position="371"/>
        <end position="384"/>
    </location>
</feature>
<feature type="modified residue" description="Phosphoserine" evidence="1">
    <location>
        <position position="214"/>
    </location>
</feature>
<feature type="modified residue" description="N6-methyllysine" evidence="1">
    <location>
        <position position="311"/>
    </location>
</feature>
<sequence length="384" mass="42636">MATASARWNHVWVGTETGILKGVNLQRKHAANFTPSGQPRREEAVNALCWGTGGETQILVGCADRTVRYFNAEEGTFLSQRYCPGGEGTFRGLAQADGTLITCVDSGILRVWCENDKEASSDPLLELKVGPGVCRMRQDPTHTHVVATCGKENALKVWDLQGSEEPVFRAKNVRNDWLDLRVPIWDQDTQFLPGSQKLVTCTGYHQVRVYDPVSPQRRPVLEATYGEYPLTAMTLTPEGNSVIVGNTHGQLAEIDFRQGRLLGCLKGLAGSVRGLQCHPSKPLLASCGLDRVLRIHRIRNPRGLEHKVYLKSQLNCLLLSGRDNWEDEPQEPQEPNQVPSEDTETDELWASLEAAAKRKLPDLDQTQGALQRRKKKKRPGSTSP</sequence>
<name>WDR74_MOUSE</name>
<dbReference type="EMBL" id="BC019968">
    <property type="protein sequence ID" value="AAH19968.1"/>
    <property type="molecule type" value="mRNA"/>
</dbReference>
<dbReference type="EMBL" id="AK077521">
    <property type="protein sequence ID" value="BAC36842.1"/>
    <property type="molecule type" value="mRNA"/>
</dbReference>
<dbReference type="CCDS" id="CCDS29541.1"/>
<dbReference type="RefSeq" id="NP_598900.1">
    <property type="nucleotide sequence ID" value="NM_134139.1"/>
</dbReference>
<dbReference type="SMR" id="Q8VCG3"/>
<dbReference type="BioGRID" id="223197">
    <property type="interactions" value="3"/>
</dbReference>
<dbReference type="FunCoup" id="Q8VCG3">
    <property type="interactions" value="2903"/>
</dbReference>
<dbReference type="STRING" id="10090.ENSMUSP00000043315"/>
<dbReference type="iPTMnet" id="Q8VCG3"/>
<dbReference type="PhosphoSitePlus" id="Q8VCG3"/>
<dbReference type="PaxDb" id="10090-ENSMUSP00000043315"/>
<dbReference type="PeptideAtlas" id="Q8VCG3"/>
<dbReference type="ProteomicsDB" id="297550"/>
<dbReference type="Pumba" id="Q8VCG3"/>
<dbReference type="Antibodypedia" id="28811">
    <property type="antibodies" value="201 antibodies from 24 providers"/>
</dbReference>
<dbReference type="DNASU" id="107071"/>
<dbReference type="Ensembl" id="ENSMUST00000049424.11">
    <property type="protein sequence ID" value="ENSMUSP00000043315.10"/>
    <property type="gene ID" value="ENSMUSG00000042729.12"/>
</dbReference>
<dbReference type="GeneID" id="107071"/>
<dbReference type="KEGG" id="mmu:107071"/>
<dbReference type="UCSC" id="uc008gmm.1">
    <property type="organism name" value="mouse"/>
</dbReference>
<dbReference type="AGR" id="MGI:2147427"/>
<dbReference type="CTD" id="54663"/>
<dbReference type="MGI" id="MGI:2147427">
    <property type="gene designation" value="Wdr74"/>
</dbReference>
<dbReference type="VEuPathDB" id="HostDB:ENSMUSG00000042729"/>
<dbReference type="eggNOG" id="KOG3881">
    <property type="taxonomic scope" value="Eukaryota"/>
</dbReference>
<dbReference type="GeneTree" id="ENSGT00390000015119"/>
<dbReference type="HOGENOM" id="CLU_033769_2_0_1"/>
<dbReference type="InParanoid" id="Q8VCG3"/>
<dbReference type="OMA" id="KNVCRMR"/>
<dbReference type="OrthoDB" id="18388at2759"/>
<dbReference type="PhylomeDB" id="Q8VCG3"/>
<dbReference type="TreeFam" id="TF314666"/>
<dbReference type="BioGRID-ORCS" id="107071">
    <property type="hits" value="28 hits in 79 CRISPR screens"/>
</dbReference>
<dbReference type="PRO" id="PR:Q8VCG3"/>
<dbReference type="Proteomes" id="UP000000589">
    <property type="component" value="Chromosome 19"/>
</dbReference>
<dbReference type="RNAct" id="Q8VCG3">
    <property type="molecule type" value="protein"/>
</dbReference>
<dbReference type="Bgee" id="ENSMUSG00000042729">
    <property type="expression patterns" value="Expressed in blastoderm cell in morula and 265 other cell types or tissues"/>
</dbReference>
<dbReference type="ExpressionAtlas" id="Q8VCG3">
    <property type="expression patterns" value="baseline and differential"/>
</dbReference>
<dbReference type="GO" id="GO:0000176">
    <property type="term" value="C:nuclear exosome (RNase complex)"/>
    <property type="evidence" value="ECO:0007669"/>
    <property type="project" value="Ensembl"/>
</dbReference>
<dbReference type="GO" id="GO:0005730">
    <property type="term" value="C:nucleolus"/>
    <property type="evidence" value="ECO:0007669"/>
    <property type="project" value="UniProtKB-SubCell"/>
</dbReference>
<dbReference type="GO" id="GO:0005654">
    <property type="term" value="C:nucleoplasm"/>
    <property type="evidence" value="ECO:0007669"/>
    <property type="project" value="Ensembl"/>
</dbReference>
<dbReference type="GO" id="GO:0005634">
    <property type="term" value="C:nucleus"/>
    <property type="evidence" value="ECO:0000314"/>
    <property type="project" value="MGI"/>
</dbReference>
<dbReference type="GO" id="GO:0001825">
    <property type="term" value="P:blastocyst formation"/>
    <property type="evidence" value="ECO:0000315"/>
    <property type="project" value="MGI"/>
</dbReference>
<dbReference type="GO" id="GO:0042273">
    <property type="term" value="P:ribosomal large subunit biogenesis"/>
    <property type="evidence" value="ECO:0000250"/>
    <property type="project" value="UniProtKB"/>
</dbReference>
<dbReference type="GO" id="GO:0016070">
    <property type="term" value="P:RNA metabolic process"/>
    <property type="evidence" value="ECO:0000315"/>
    <property type="project" value="MGI"/>
</dbReference>
<dbReference type="GO" id="GO:0006364">
    <property type="term" value="P:rRNA processing"/>
    <property type="evidence" value="ECO:0000250"/>
    <property type="project" value="UniProtKB"/>
</dbReference>
<dbReference type="CDD" id="cd22857">
    <property type="entry name" value="WDR74"/>
    <property type="match status" value="1"/>
</dbReference>
<dbReference type="FunFam" id="2.130.10.10:FF:000214">
    <property type="entry name" value="WD repeat-containing protein 74"/>
    <property type="match status" value="1"/>
</dbReference>
<dbReference type="FunFam" id="2.130.10.10:FF:000287">
    <property type="entry name" value="WD repeat-containing protein 74"/>
    <property type="match status" value="1"/>
</dbReference>
<dbReference type="Gene3D" id="2.130.10.10">
    <property type="entry name" value="YVTN repeat-like/Quinoprotein amine dehydrogenase"/>
    <property type="match status" value="2"/>
</dbReference>
<dbReference type="InterPro" id="IPR015943">
    <property type="entry name" value="WD40/YVTN_repeat-like_dom_sf"/>
</dbReference>
<dbReference type="InterPro" id="IPR036322">
    <property type="entry name" value="WD40_repeat_dom_sf"/>
</dbReference>
<dbReference type="InterPro" id="IPR001680">
    <property type="entry name" value="WD40_rpt"/>
</dbReference>
<dbReference type="InterPro" id="IPR037379">
    <property type="entry name" value="WDR74/Nsa1"/>
</dbReference>
<dbReference type="PANTHER" id="PTHR16038">
    <property type="entry name" value="NOP SEVEN ASSOCIATED PROTEIN 1"/>
    <property type="match status" value="1"/>
</dbReference>
<dbReference type="PANTHER" id="PTHR16038:SF4">
    <property type="entry name" value="WD REPEAT-CONTAINING PROTEIN 74"/>
    <property type="match status" value="1"/>
</dbReference>
<dbReference type="Pfam" id="PF00400">
    <property type="entry name" value="WD40"/>
    <property type="match status" value="1"/>
</dbReference>
<dbReference type="SMART" id="SM00320">
    <property type="entry name" value="WD40"/>
    <property type="match status" value="3"/>
</dbReference>
<dbReference type="SUPFAM" id="SSF50978">
    <property type="entry name" value="WD40 repeat-like"/>
    <property type="match status" value="1"/>
</dbReference>
<reference key="1">
    <citation type="journal article" date="2005" name="Science">
        <title>The transcriptional landscape of the mammalian genome.</title>
        <authorList>
            <person name="Carninci P."/>
            <person name="Kasukawa T."/>
            <person name="Katayama S."/>
            <person name="Gough J."/>
            <person name="Frith M.C."/>
            <person name="Maeda N."/>
            <person name="Oyama R."/>
            <person name="Ravasi T."/>
            <person name="Lenhard B."/>
            <person name="Wells C."/>
            <person name="Kodzius R."/>
            <person name="Shimokawa K."/>
            <person name="Bajic V.B."/>
            <person name="Brenner S.E."/>
            <person name="Batalov S."/>
            <person name="Forrest A.R."/>
            <person name="Zavolan M."/>
            <person name="Davis M.J."/>
            <person name="Wilming L.G."/>
            <person name="Aidinis V."/>
            <person name="Allen J.E."/>
            <person name="Ambesi-Impiombato A."/>
            <person name="Apweiler R."/>
            <person name="Aturaliya R.N."/>
            <person name="Bailey T.L."/>
            <person name="Bansal M."/>
            <person name="Baxter L."/>
            <person name="Beisel K.W."/>
            <person name="Bersano T."/>
            <person name="Bono H."/>
            <person name="Chalk A.M."/>
            <person name="Chiu K.P."/>
            <person name="Choudhary V."/>
            <person name="Christoffels A."/>
            <person name="Clutterbuck D.R."/>
            <person name="Crowe M.L."/>
            <person name="Dalla E."/>
            <person name="Dalrymple B.P."/>
            <person name="de Bono B."/>
            <person name="Della Gatta G."/>
            <person name="di Bernardo D."/>
            <person name="Down T."/>
            <person name="Engstrom P."/>
            <person name="Fagiolini M."/>
            <person name="Faulkner G."/>
            <person name="Fletcher C.F."/>
            <person name="Fukushima T."/>
            <person name="Furuno M."/>
            <person name="Futaki S."/>
            <person name="Gariboldi M."/>
            <person name="Georgii-Hemming P."/>
            <person name="Gingeras T.R."/>
            <person name="Gojobori T."/>
            <person name="Green R.E."/>
            <person name="Gustincich S."/>
            <person name="Harbers M."/>
            <person name="Hayashi Y."/>
            <person name="Hensch T.K."/>
            <person name="Hirokawa N."/>
            <person name="Hill D."/>
            <person name="Huminiecki L."/>
            <person name="Iacono M."/>
            <person name="Ikeo K."/>
            <person name="Iwama A."/>
            <person name="Ishikawa T."/>
            <person name="Jakt M."/>
            <person name="Kanapin A."/>
            <person name="Katoh M."/>
            <person name="Kawasawa Y."/>
            <person name="Kelso J."/>
            <person name="Kitamura H."/>
            <person name="Kitano H."/>
            <person name="Kollias G."/>
            <person name="Krishnan S.P."/>
            <person name="Kruger A."/>
            <person name="Kummerfeld S.K."/>
            <person name="Kurochkin I.V."/>
            <person name="Lareau L.F."/>
            <person name="Lazarevic D."/>
            <person name="Lipovich L."/>
            <person name="Liu J."/>
            <person name="Liuni S."/>
            <person name="McWilliam S."/>
            <person name="Madan Babu M."/>
            <person name="Madera M."/>
            <person name="Marchionni L."/>
            <person name="Matsuda H."/>
            <person name="Matsuzawa S."/>
            <person name="Miki H."/>
            <person name="Mignone F."/>
            <person name="Miyake S."/>
            <person name="Morris K."/>
            <person name="Mottagui-Tabar S."/>
            <person name="Mulder N."/>
            <person name="Nakano N."/>
            <person name="Nakauchi H."/>
            <person name="Ng P."/>
            <person name="Nilsson R."/>
            <person name="Nishiguchi S."/>
            <person name="Nishikawa S."/>
            <person name="Nori F."/>
            <person name="Ohara O."/>
            <person name="Okazaki Y."/>
            <person name="Orlando V."/>
            <person name="Pang K.C."/>
            <person name="Pavan W.J."/>
            <person name="Pavesi G."/>
            <person name="Pesole G."/>
            <person name="Petrovsky N."/>
            <person name="Piazza S."/>
            <person name="Reed J."/>
            <person name="Reid J.F."/>
            <person name="Ring B.Z."/>
            <person name="Ringwald M."/>
            <person name="Rost B."/>
            <person name="Ruan Y."/>
            <person name="Salzberg S.L."/>
            <person name="Sandelin A."/>
            <person name="Schneider C."/>
            <person name="Schoenbach C."/>
            <person name="Sekiguchi K."/>
            <person name="Semple C.A."/>
            <person name="Seno S."/>
            <person name="Sessa L."/>
            <person name="Sheng Y."/>
            <person name="Shibata Y."/>
            <person name="Shimada H."/>
            <person name="Shimada K."/>
            <person name="Silva D."/>
            <person name="Sinclair B."/>
            <person name="Sperling S."/>
            <person name="Stupka E."/>
            <person name="Sugiura K."/>
            <person name="Sultana R."/>
            <person name="Takenaka Y."/>
            <person name="Taki K."/>
            <person name="Tammoja K."/>
            <person name="Tan S.L."/>
            <person name="Tang S."/>
            <person name="Taylor M.S."/>
            <person name="Tegner J."/>
            <person name="Teichmann S.A."/>
            <person name="Ueda H.R."/>
            <person name="van Nimwegen E."/>
            <person name="Verardo R."/>
            <person name="Wei C.L."/>
            <person name="Yagi K."/>
            <person name="Yamanishi H."/>
            <person name="Zabarovsky E."/>
            <person name="Zhu S."/>
            <person name="Zimmer A."/>
            <person name="Hide W."/>
            <person name="Bult C."/>
            <person name="Grimmond S.M."/>
            <person name="Teasdale R.D."/>
            <person name="Liu E.T."/>
            <person name="Brusic V."/>
            <person name="Quackenbush J."/>
            <person name="Wahlestedt C."/>
            <person name="Mattick J.S."/>
            <person name="Hume D.A."/>
            <person name="Kai C."/>
            <person name="Sasaki D."/>
            <person name="Tomaru Y."/>
            <person name="Fukuda S."/>
            <person name="Kanamori-Katayama M."/>
            <person name="Suzuki M."/>
            <person name="Aoki J."/>
            <person name="Arakawa T."/>
            <person name="Iida J."/>
            <person name="Imamura K."/>
            <person name="Itoh M."/>
            <person name="Kato T."/>
            <person name="Kawaji H."/>
            <person name="Kawagashira N."/>
            <person name="Kawashima T."/>
            <person name="Kojima M."/>
            <person name="Kondo S."/>
            <person name="Konno H."/>
            <person name="Nakano K."/>
            <person name="Ninomiya N."/>
            <person name="Nishio T."/>
            <person name="Okada M."/>
            <person name="Plessy C."/>
            <person name="Shibata K."/>
            <person name="Shiraki T."/>
            <person name="Suzuki S."/>
            <person name="Tagami M."/>
            <person name="Waki K."/>
            <person name="Watahiki A."/>
            <person name="Okamura-Oho Y."/>
            <person name="Suzuki H."/>
            <person name="Kawai J."/>
            <person name="Hayashizaki Y."/>
        </authorList>
    </citation>
    <scope>NUCLEOTIDE SEQUENCE [LARGE SCALE MRNA]</scope>
    <source>
        <strain>C57BL/6J</strain>
    </source>
</reference>
<reference key="2">
    <citation type="journal article" date="2004" name="Genome Res.">
        <title>The status, quality, and expansion of the NIH full-length cDNA project: the Mammalian Gene Collection (MGC).</title>
        <authorList>
            <consortium name="The MGC Project Team"/>
        </authorList>
    </citation>
    <scope>NUCLEOTIDE SEQUENCE [LARGE SCALE MRNA]</scope>
    <source>
        <strain>FVB/N</strain>
        <tissue>Salivary gland</tissue>
    </source>
</reference>
<reference key="3">
    <citation type="journal article" date="2011" name="PLoS ONE">
        <title>Wdr74 is required for blastocyst formation in the mouse.</title>
        <authorList>
            <person name="Maserati M."/>
            <person name="Walentuk M."/>
            <person name="Dai X."/>
            <person name="Holston O."/>
            <person name="Adams D."/>
            <person name="Mager J."/>
        </authorList>
    </citation>
    <scope>FUNCTION</scope>
    <scope>DEVELOPMENTAL STAGE</scope>
    <scope>SUBCELLULAR LOCATION</scope>
</reference>
<evidence type="ECO:0000250" key="1">
    <source>
        <dbReference type="UniProtKB" id="Q6RFH5"/>
    </source>
</evidence>
<evidence type="ECO:0000256" key="2">
    <source>
        <dbReference type="SAM" id="MobiDB-lite"/>
    </source>
</evidence>
<evidence type="ECO:0000269" key="3">
    <source>
    </source>
</evidence>